<protein>
    <recommendedName>
        <fullName evidence="1">Large ribosomal subunit protein bL33</fullName>
    </recommendedName>
    <alternativeName>
        <fullName evidence="2">50S ribosomal protein L33</fullName>
    </alternativeName>
</protein>
<keyword id="KW-1185">Reference proteome</keyword>
<keyword id="KW-0687">Ribonucleoprotein</keyword>
<keyword id="KW-0689">Ribosomal protein</keyword>
<sequence length="55" mass="6319">MAKAVTIKVKLVSSADTGFYYVAKKNSRTMTDKLVKKKYDPVARKHVEFREAKIK</sequence>
<organism>
    <name type="scientific">Bradyrhizobium diazoefficiens (strain JCM 10833 / BCRC 13528 / IAM 13628 / NBRC 14792 / USDA 110)</name>
    <dbReference type="NCBI Taxonomy" id="224911"/>
    <lineage>
        <taxon>Bacteria</taxon>
        <taxon>Pseudomonadati</taxon>
        <taxon>Pseudomonadota</taxon>
        <taxon>Alphaproteobacteria</taxon>
        <taxon>Hyphomicrobiales</taxon>
        <taxon>Nitrobacteraceae</taxon>
        <taxon>Bradyrhizobium</taxon>
    </lineage>
</organism>
<proteinExistence type="inferred from homology"/>
<accession>Q89K02</accession>
<name>RL33_BRADU</name>
<dbReference type="EMBL" id="BA000040">
    <property type="protein sequence ID" value="BAC50382.1"/>
    <property type="molecule type" value="Genomic_DNA"/>
</dbReference>
<dbReference type="RefSeq" id="NP_771757.1">
    <property type="nucleotide sequence ID" value="NC_004463.1"/>
</dbReference>
<dbReference type="RefSeq" id="WP_007603295.1">
    <property type="nucleotide sequence ID" value="NZ_CP011360.1"/>
</dbReference>
<dbReference type="SMR" id="Q89K02"/>
<dbReference type="FunCoup" id="Q89K02">
    <property type="interactions" value="586"/>
</dbReference>
<dbReference type="STRING" id="224911.AAV28_22955"/>
<dbReference type="EnsemblBacteria" id="BAC50382">
    <property type="protein sequence ID" value="BAC50382"/>
    <property type="gene ID" value="BAC50382"/>
</dbReference>
<dbReference type="GeneID" id="93217492"/>
<dbReference type="KEGG" id="bja:bsr5117"/>
<dbReference type="PATRIC" id="fig|224911.44.peg.4987"/>
<dbReference type="eggNOG" id="COG0267">
    <property type="taxonomic scope" value="Bacteria"/>
</dbReference>
<dbReference type="HOGENOM" id="CLU_190949_1_1_5"/>
<dbReference type="InParanoid" id="Q89K02"/>
<dbReference type="OrthoDB" id="21586at2"/>
<dbReference type="PhylomeDB" id="Q89K02"/>
<dbReference type="PRO" id="PR:Q89K02"/>
<dbReference type="Proteomes" id="UP000002526">
    <property type="component" value="Chromosome"/>
</dbReference>
<dbReference type="GO" id="GO:0022625">
    <property type="term" value="C:cytosolic large ribosomal subunit"/>
    <property type="evidence" value="ECO:0000318"/>
    <property type="project" value="GO_Central"/>
</dbReference>
<dbReference type="GO" id="GO:0003735">
    <property type="term" value="F:structural constituent of ribosome"/>
    <property type="evidence" value="ECO:0000318"/>
    <property type="project" value="GO_Central"/>
</dbReference>
<dbReference type="GO" id="GO:0006412">
    <property type="term" value="P:translation"/>
    <property type="evidence" value="ECO:0007669"/>
    <property type="project" value="UniProtKB-UniRule"/>
</dbReference>
<dbReference type="FunFam" id="2.20.28.120:FF:000003">
    <property type="entry name" value="50S ribosomal protein L33"/>
    <property type="match status" value="1"/>
</dbReference>
<dbReference type="Gene3D" id="2.20.28.120">
    <property type="entry name" value="Ribosomal protein L33"/>
    <property type="match status" value="1"/>
</dbReference>
<dbReference type="HAMAP" id="MF_00294">
    <property type="entry name" value="Ribosomal_bL33"/>
    <property type="match status" value="1"/>
</dbReference>
<dbReference type="InterPro" id="IPR001705">
    <property type="entry name" value="Ribosomal_bL33"/>
</dbReference>
<dbReference type="InterPro" id="IPR038584">
    <property type="entry name" value="Ribosomal_bL33_sf"/>
</dbReference>
<dbReference type="InterPro" id="IPR011332">
    <property type="entry name" value="Ribosomal_zn-bd"/>
</dbReference>
<dbReference type="NCBIfam" id="NF001860">
    <property type="entry name" value="PRK00595.1"/>
    <property type="match status" value="1"/>
</dbReference>
<dbReference type="NCBIfam" id="TIGR01023">
    <property type="entry name" value="rpmG_bact"/>
    <property type="match status" value="1"/>
</dbReference>
<dbReference type="PANTHER" id="PTHR15238">
    <property type="entry name" value="54S RIBOSOMAL PROTEIN L39, MITOCHONDRIAL"/>
    <property type="match status" value="1"/>
</dbReference>
<dbReference type="PANTHER" id="PTHR15238:SF1">
    <property type="entry name" value="LARGE RIBOSOMAL SUBUNIT PROTEIN BL33M"/>
    <property type="match status" value="1"/>
</dbReference>
<dbReference type="Pfam" id="PF00471">
    <property type="entry name" value="Ribosomal_L33"/>
    <property type="match status" value="1"/>
</dbReference>
<dbReference type="SUPFAM" id="SSF57829">
    <property type="entry name" value="Zn-binding ribosomal proteins"/>
    <property type="match status" value="1"/>
</dbReference>
<feature type="chain" id="PRO_0000356405" description="Large ribosomal subunit protein bL33">
    <location>
        <begin position="1"/>
        <end position="55"/>
    </location>
</feature>
<evidence type="ECO:0000255" key="1">
    <source>
        <dbReference type="HAMAP-Rule" id="MF_00294"/>
    </source>
</evidence>
<evidence type="ECO:0000305" key="2"/>
<gene>
    <name evidence="1" type="primary">rpmG</name>
    <name type="ordered locus">bsr5117</name>
</gene>
<comment type="similarity">
    <text evidence="1">Belongs to the bacterial ribosomal protein bL33 family.</text>
</comment>
<reference key="1">
    <citation type="journal article" date="2002" name="DNA Res.">
        <title>Complete genomic sequence of nitrogen-fixing symbiotic bacterium Bradyrhizobium japonicum USDA110.</title>
        <authorList>
            <person name="Kaneko T."/>
            <person name="Nakamura Y."/>
            <person name="Sato S."/>
            <person name="Minamisawa K."/>
            <person name="Uchiumi T."/>
            <person name="Sasamoto S."/>
            <person name="Watanabe A."/>
            <person name="Idesawa K."/>
            <person name="Iriguchi M."/>
            <person name="Kawashima K."/>
            <person name="Kohara M."/>
            <person name="Matsumoto M."/>
            <person name="Shimpo S."/>
            <person name="Tsuruoka H."/>
            <person name="Wada T."/>
            <person name="Yamada M."/>
            <person name="Tabata S."/>
        </authorList>
    </citation>
    <scope>NUCLEOTIDE SEQUENCE [LARGE SCALE GENOMIC DNA]</scope>
    <source>
        <strain>JCM 10833 / BCRC 13528 / IAM 13628 / NBRC 14792 / USDA 110</strain>
    </source>
</reference>